<feature type="chain" id="PRO_0000178695" description="Probable chromosome-partitioning protein ParB">
    <location>
        <begin position="1"/>
        <end position="310"/>
    </location>
</feature>
<proteinExistence type="inferred from homology"/>
<protein>
    <recommendedName>
        <fullName>Probable chromosome-partitioning protein ParB</fullName>
    </recommendedName>
</protein>
<name>PARB_XYLFT</name>
<keyword id="KW-0159">Chromosome partition</keyword>
<keyword id="KW-0238">DNA-binding</keyword>
<keyword id="KW-1185">Reference proteome</keyword>
<gene>
    <name type="primary">parB</name>
    <name type="ordered locus">PD_1315</name>
</gene>
<reference key="1">
    <citation type="journal article" date="2003" name="J. Bacteriol.">
        <title>Comparative analyses of the complete genome sequences of Pierce's disease and citrus variegated chlorosis strains of Xylella fastidiosa.</title>
        <authorList>
            <person name="Van Sluys M.A."/>
            <person name="de Oliveira M.C."/>
            <person name="Monteiro-Vitorello C.B."/>
            <person name="Miyaki C.Y."/>
            <person name="Furlan L.R."/>
            <person name="Camargo L.E.A."/>
            <person name="da Silva A.C.R."/>
            <person name="Moon D.H."/>
            <person name="Takita M.A."/>
            <person name="Lemos E.G.M."/>
            <person name="Machado M.A."/>
            <person name="Ferro M.I.T."/>
            <person name="da Silva F.R."/>
            <person name="Goldman M.H.S."/>
            <person name="Goldman G.H."/>
            <person name="Lemos M.V.F."/>
            <person name="El-Dorry H."/>
            <person name="Tsai S.M."/>
            <person name="Carrer H."/>
            <person name="Carraro D.M."/>
            <person name="de Oliveira R.C."/>
            <person name="Nunes L.R."/>
            <person name="Siqueira W.J."/>
            <person name="Coutinho L.L."/>
            <person name="Kimura E.T."/>
            <person name="Ferro E.S."/>
            <person name="Harakava R."/>
            <person name="Kuramae E.E."/>
            <person name="Marino C.L."/>
            <person name="Giglioti E."/>
            <person name="Abreu I.L."/>
            <person name="Alves L.M.C."/>
            <person name="do Amaral A.M."/>
            <person name="Baia G.S."/>
            <person name="Blanco S.R."/>
            <person name="Brito M.S."/>
            <person name="Cannavan F.S."/>
            <person name="Celestino A.V."/>
            <person name="da Cunha A.F."/>
            <person name="Fenille R.C."/>
            <person name="Ferro J.A."/>
            <person name="Formighieri E.F."/>
            <person name="Kishi L.T."/>
            <person name="Leoni S.G."/>
            <person name="Oliveira A.R."/>
            <person name="Rosa V.E. Jr."/>
            <person name="Sassaki F.T."/>
            <person name="Sena J.A.D."/>
            <person name="de Souza A.A."/>
            <person name="Truffi D."/>
            <person name="Tsukumo F."/>
            <person name="Yanai G.M."/>
            <person name="Zaros L.G."/>
            <person name="Civerolo E.L."/>
            <person name="Simpson A.J.G."/>
            <person name="Almeida N.F. Jr."/>
            <person name="Setubal J.C."/>
            <person name="Kitajima J.P."/>
        </authorList>
    </citation>
    <scope>NUCLEOTIDE SEQUENCE [LARGE SCALE GENOMIC DNA]</scope>
    <source>
        <strain>Temecula1 / ATCC 700964</strain>
    </source>
</reference>
<evidence type="ECO:0000250" key="1"/>
<evidence type="ECO:0000305" key="2"/>
<sequence>MNKPSLPLKKRGLGRGLEALLGSKGGSSVPPTVAQEQLPGEVLRTLQTTQLQPSKYQPRREMSEAKLAELADSIKAQGVIQPIIVRELDVDMFEIVAGERRWRASQLAGLTEVPVIVRELDDRTVVAMALIENIQREDLNPLEEAQALQRLIDEFSLTHAEAAEAVGRSRAAVSNLLRLLELPLGIRTLLESHQLEMGHARALLTLTPELAAKLAKEAADQGWSVREVEHRAQQFAAGKVPDIRDKKSKSLASAPAQPDIASLETELSERLGTKVAINHGRTGKGKLVIHYTDLDVLDGVLERLRARAVG</sequence>
<organism>
    <name type="scientific">Xylella fastidiosa (strain Temecula1 / ATCC 700964)</name>
    <dbReference type="NCBI Taxonomy" id="183190"/>
    <lineage>
        <taxon>Bacteria</taxon>
        <taxon>Pseudomonadati</taxon>
        <taxon>Pseudomonadota</taxon>
        <taxon>Gammaproteobacteria</taxon>
        <taxon>Lysobacterales</taxon>
        <taxon>Lysobacteraceae</taxon>
        <taxon>Xylella</taxon>
    </lineage>
</organism>
<dbReference type="EMBL" id="AE009442">
    <property type="protein sequence ID" value="AAO29164.1"/>
    <property type="molecule type" value="Genomic_DNA"/>
</dbReference>
<dbReference type="RefSeq" id="WP_004088267.1">
    <property type="nucleotide sequence ID" value="NC_004556.1"/>
</dbReference>
<dbReference type="SMR" id="Q87BY1"/>
<dbReference type="KEGG" id="xft:PD_1315"/>
<dbReference type="HOGENOM" id="CLU_023853_0_0_6"/>
<dbReference type="Proteomes" id="UP000002516">
    <property type="component" value="Chromosome"/>
</dbReference>
<dbReference type="GO" id="GO:0005694">
    <property type="term" value="C:chromosome"/>
    <property type="evidence" value="ECO:0007669"/>
    <property type="project" value="TreeGrafter"/>
</dbReference>
<dbReference type="GO" id="GO:0003677">
    <property type="term" value="F:DNA binding"/>
    <property type="evidence" value="ECO:0007669"/>
    <property type="project" value="UniProtKB-KW"/>
</dbReference>
<dbReference type="GO" id="GO:0007059">
    <property type="term" value="P:chromosome segregation"/>
    <property type="evidence" value="ECO:0007669"/>
    <property type="project" value="UniProtKB-KW"/>
</dbReference>
<dbReference type="GO" id="GO:0045881">
    <property type="term" value="P:positive regulation of sporulation resulting in formation of a cellular spore"/>
    <property type="evidence" value="ECO:0007669"/>
    <property type="project" value="TreeGrafter"/>
</dbReference>
<dbReference type="CDD" id="cd16393">
    <property type="entry name" value="SPO0J_N"/>
    <property type="match status" value="1"/>
</dbReference>
<dbReference type="FunFam" id="1.10.10.2830:FF:000001">
    <property type="entry name" value="Chromosome partitioning protein ParB"/>
    <property type="match status" value="1"/>
</dbReference>
<dbReference type="FunFam" id="3.90.1530.30:FF:000001">
    <property type="entry name" value="Chromosome partitioning protein ParB"/>
    <property type="match status" value="1"/>
</dbReference>
<dbReference type="Gene3D" id="1.10.10.2830">
    <property type="match status" value="1"/>
</dbReference>
<dbReference type="Gene3D" id="3.90.1530.30">
    <property type="match status" value="1"/>
</dbReference>
<dbReference type="InterPro" id="IPR050336">
    <property type="entry name" value="Chromosome_partition/occlusion"/>
</dbReference>
<dbReference type="InterPro" id="IPR041468">
    <property type="entry name" value="HTH_ParB/Spo0J"/>
</dbReference>
<dbReference type="InterPro" id="IPR004437">
    <property type="entry name" value="ParB/RepB/Spo0J"/>
</dbReference>
<dbReference type="InterPro" id="IPR003115">
    <property type="entry name" value="ParB/Sulfiredoxin_dom"/>
</dbReference>
<dbReference type="InterPro" id="IPR036086">
    <property type="entry name" value="ParB/Sulfiredoxin_sf"/>
</dbReference>
<dbReference type="InterPro" id="IPR057240">
    <property type="entry name" value="ParB_dimer_C"/>
</dbReference>
<dbReference type="NCBIfam" id="TIGR00180">
    <property type="entry name" value="parB_part"/>
    <property type="match status" value="1"/>
</dbReference>
<dbReference type="PANTHER" id="PTHR33375">
    <property type="entry name" value="CHROMOSOME-PARTITIONING PROTEIN PARB-RELATED"/>
    <property type="match status" value="1"/>
</dbReference>
<dbReference type="PANTHER" id="PTHR33375:SF1">
    <property type="entry name" value="CHROMOSOME-PARTITIONING PROTEIN PARB-RELATED"/>
    <property type="match status" value="1"/>
</dbReference>
<dbReference type="Pfam" id="PF17762">
    <property type="entry name" value="HTH_ParB"/>
    <property type="match status" value="1"/>
</dbReference>
<dbReference type="Pfam" id="PF23552">
    <property type="entry name" value="ParB_dimer"/>
    <property type="match status" value="1"/>
</dbReference>
<dbReference type="Pfam" id="PF02195">
    <property type="entry name" value="ParBc"/>
    <property type="match status" value="1"/>
</dbReference>
<dbReference type="SMART" id="SM00470">
    <property type="entry name" value="ParB"/>
    <property type="match status" value="1"/>
</dbReference>
<dbReference type="SUPFAM" id="SSF110849">
    <property type="entry name" value="ParB/Sulfiredoxin"/>
    <property type="match status" value="1"/>
</dbReference>
<comment type="function">
    <text evidence="1">Involved in chromosome partition. Localize to both poles of the predivisional cell following completion of DNA replication. Binds to the DNA origin of replication (By similarity).</text>
</comment>
<comment type="similarity">
    <text evidence="2">Belongs to the ParB family.</text>
</comment>
<accession>Q87BY1</accession>